<organism>
    <name type="scientific">Methanosphaera stadtmanae (strain ATCC 43021 / DSM 3091 / JCM 11832 / MCB-3)</name>
    <dbReference type="NCBI Taxonomy" id="339860"/>
    <lineage>
        <taxon>Archaea</taxon>
        <taxon>Methanobacteriati</taxon>
        <taxon>Methanobacteriota</taxon>
        <taxon>Methanomada group</taxon>
        <taxon>Methanobacteria</taxon>
        <taxon>Methanobacteriales</taxon>
        <taxon>Methanobacteriaceae</taxon>
        <taxon>Methanosphaera</taxon>
    </lineage>
</organism>
<dbReference type="EC" id="2.5.1.19" evidence="1"/>
<dbReference type="EMBL" id="CP000102">
    <property type="protein sequence ID" value="ABC56898.1"/>
    <property type="molecule type" value="Genomic_DNA"/>
</dbReference>
<dbReference type="RefSeq" id="WP_011406098.1">
    <property type="nucleotide sequence ID" value="NC_007681.1"/>
</dbReference>
<dbReference type="SMR" id="Q2NH05"/>
<dbReference type="STRING" id="339860.Msp_0498"/>
<dbReference type="GeneID" id="41325069"/>
<dbReference type="KEGG" id="mst:Msp_0498"/>
<dbReference type="eggNOG" id="arCOG04134">
    <property type="taxonomic scope" value="Archaea"/>
</dbReference>
<dbReference type="HOGENOM" id="CLU_024321_0_0_2"/>
<dbReference type="OrthoDB" id="43788at2157"/>
<dbReference type="UniPathway" id="UPA00053"/>
<dbReference type="Proteomes" id="UP000001931">
    <property type="component" value="Chromosome"/>
</dbReference>
<dbReference type="GO" id="GO:0005737">
    <property type="term" value="C:cytoplasm"/>
    <property type="evidence" value="ECO:0007669"/>
    <property type="project" value="UniProtKB-SubCell"/>
</dbReference>
<dbReference type="GO" id="GO:0003866">
    <property type="term" value="F:3-phosphoshikimate 1-carboxyvinyltransferase activity"/>
    <property type="evidence" value="ECO:0007669"/>
    <property type="project" value="UniProtKB-UniRule"/>
</dbReference>
<dbReference type="GO" id="GO:0008652">
    <property type="term" value="P:amino acid biosynthetic process"/>
    <property type="evidence" value="ECO:0007669"/>
    <property type="project" value="UniProtKB-KW"/>
</dbReference>
<dbReference type="GO" id="GO:0009073">
    <property type="term" value="P:aromatic amino acid family biosynthetic process"/>
    <property type="evidence" value="ECO:0007669"/>
    <property type="project" value="UniProtKB-KW"/>
</dbReference>
<dbReference type="GO" id="GO:0009423">
    <property type="term" value="P:chorismate biosynthetic process"/>
    <property type="evidence" value="ECO:0007669"/>
    <property type="project" value="UniProtKB-UniRule"/>
</dbReference>
<dbReference type="CDD" id="cd01556">
    <property type="entry name" value="EPSP_synthase"/>
    <property type="match status" value="1"/>
</dbReference>
<dbReference type="Gene3D" id="3.65.10.10">
    <property type="entry name" value="Enolpyruvate transferase domain"/>
    <property type="match status" value="2"/>
</dbReference>
<dbReference type="HAMAP" id="MF_00210">
    <property type="entry name" value="EPSP_synth"/>
    <property type="match status" value="1"/>
</dbReference>
<dbReference type="InterPro" id="IPR001986">
    <property type="entry name" value="Enolpyruvate_Tfrase_dom"/>
</dbReference>
<dbReference type="InterPro" id="IPR036968">
    <property type="entry name" value="Enolpyruvate_Tfrase_sf"/>
</dbReference>
<dbReference type="InterPro" id="IPR006264">
    <property type="entry name" value="EPSP_synthase"/>
</dbReference>
<dbReference type="InterPro" id="IPR023193">
    <property type="entry name" value="EPSP_synthase_CS"/>
</dbReference>
<dbReference type="InterPro" id="IPR013792">
    <property type="entry name" value="RNA3'P_cycl/enolpyr_Trfase_a/b"/>
</dbReference>
<dbReference type="NCBIfam" id="TIGR01356">
    <property type="entry name" value="aroA"/>
    <property type="match status" value="1"/>
</dbReference>
<dbReference type="PANTHER" id="PTHR21090">
    <property type="entry name" value="AROM/DEHYDROQUINATE SYNTHASE"/>
    <property type="match status" value="1"/>
</dbReference>
<dbReference type="PANTHER" id="PTHR21090:SF5">
    <property type="entry name" value="PENTAFUNCTIONAL AROM POLYPEPTIDE"/>
    <property type="match status" value="1"/>
</dbReference>
<dbReference type="Pfam" id="PF00275">
    <property type="entry name" value="EPSP_synthase"/>
    <property type="match status" value="1"/>
</dbReference>
<dbReference type="PIRSF" id="PIRSF000505">
    <property type="entry name" value="EPSPS"/>
    <property type="match status" value="1"/>
</dbReference>
<dbReference type="SUPFAM" id="SSF55205">
    <property type="entry name" value="EPT/RTPC-like"/>
    <property type="match status" value="1"/>
</dbReference>
<dbReference type="PROSITE" id="PS00104">
    <property type="entry name" value="EPSP_SYNTHASE_1"/>
    <property type="match status" value="1"/>
</dbReference>
<gene>
    <name evidence="1" type="primary">aroA</name>
    <name type="ordered locus">Msp_0498</name>
</gene>
<accession>Q2NH05</accession>
<sequence>MDLQVEKINKISGVIKAPASKSYSHRAFIAAALAEGQSILRDPLYSADTIATLEACEQLGALFQRYPDKCIVQGTAGYIRTPENIIDVKNSGTSVRILSSVAAIAPRANYTIFTGDESLRKRPMQDLIDALENLGVQISSSQSNGTPPIIVKGGFEGGQTDIKGDVSSQFISSIIMAAPYSKKPVTLNVKGTFVSKPYVNMTLSVISKFGIDFEYDTTNIPEYSSYYIEPQKYEATDYTIEGDYSSASYILAAAAMLPSNLTVKNLYKDSMQGDKIIIDIIKKMGAEVTVDDDQIHIESDGNLKAFDINLEDAPDLLPTISILMAQAEGVSKITGVEHARFKETDRVHNCAVELENVGVDVEELQDGLIIKGNPTGGYVDSHMDHRMVMAFYVLGLKIGNIIIKDASCYDISFPNFLEVMHTISEE</sequence>
<proteinExistence type="inferred from homology"/>
<feature type="chain" id="PRO_0000325407" description="3-phosphoshikimate 1-carboxyvinyltransferase">
    <location>
        <begin position="1"/>
        <end position="426"/>
    </location>
</feature>
<feature type="active site" description="Proton acceptor" evidence="1">
    <location>
        <position position="315"/>
    </location>
</feature>
<feature type="binding site" evidence="1">
    <location>
        <position position="21"/>
    </location>
    <ligand>
        <name>3-phosphoshikimate</name>
        <dbReference type="ChEBI" id="CHEBI:145989"/>
    </ligand>
</feature>
<feature type="binding site" evidence="1">
    <location>
        <position position="21"/>
    </location>
    <ligand>
        <name>phosphoenolpyruvate</name>
        <dbReference type="ChEBI" id="CHEBI:58702"/>
    </ligand>
</feature>
<feature type="binding site" evidence="1">
    <location>
        <position position="22"/>
    </location>
    <ligand>
        <name>3-phosphoshikimate</name>
        <dbReference type="ChEBI" id="CHEBI:145989"/>
    </ligand>
</feature>
<feature type="binding site" evidence="1">
    <location>
        <position position="26"/>
    </location>
    <ligand>
        <name>3-phosphoshikimate</name>
        <dbReference type="ChEBI" id="CHEBI:145989"/>
    </ligand>
</feature>
<feature type="binding site" evidence="1">
    <location>
        <position position="92"/>
    </location>
    <ligand>
        <name>phosphoenolpyruvate</name>
        <dbReference type="ChEBI" id="CHEBI:58702"/>
    </ligand>
</feature>
<feature type="binding site" evidence="1">
    <location>
        <position position="122"/>
    </location>
    <ligand>
        <name>phosphoenolpyruvate</name>
        <dbReference type="ChEBI" id="CHEBI:58702"/>
    </ligand>
</feature>
<feature type="binding site" evidence="1">
    <location>
        <position position="167"/>
    </location>
    <ligand>
        <name>3-phosphoshikimate</name>
        <dbReference type="ChEBI" id="CHEBI:145989"/>
    </ligand>
</feature>
<feature type="binding site" evidence="1">
    <location>
        <position position="168"/>
    </location>
    <ligand>
        <name>3-phosphoshikimate</name>
        <dbReference type="ChEBI" id="CHEBI:145989"/>
    </ligand>
</feature>
<feature type="binding site" evidence="1">
    <location>
        <position position="169"/>
    </location>
    <ligand>
        <name>3-phosphoshikimate</name>
        <dbReference type="ChEBI" id="CHEBI:145989"/>
    </ligand>
</feature>
<feature type="binding site" evidence="1">
    <location>
        <position position="169"/>
    </location>
    <ligand>
        <name>phosphoenolpyruvate</name>
        <dbReference type="ChEBI" id="CHEBI:58702"/>
    </ligand>
</feature>
<feature type="binding site" evidence="1">
    <location>
        <position position="195"/>
    </location>
    <ligand>
        <name>3-phosphoshikimate</name>
        <dbReference type="ChEBI" id="CHEBI:145989"/>
    </ligand>
</feature>
<feature type="binding site" evidence="1">
    <location>
        <position position="315"/>
    </location>
    <ligand>
        <name>3-phosphoshikimate</name>
        <dbReference type="ChEBI" id="CHEBI:145989"/>
    </ligand>
</feature>
<feature type="binding site" evidence="1">
    <location>
        <position position="342"/>
    </location>
    <ligand>
        <name>3-phosphoshikimate</name>
        <dbReference type="ChEBI" id="CHEBI:145989"/>
    </ligand>
</feature>
<feature type="binding site" evidence="1">
    <location>
        <position position="346"/>
    </location>
    <ligand>
        <name>phosphoenolpyruvate</name>
        <dbReference type="ChEBI" id="CHEBI:58702"/>
    </ligand>
</feature>
<feature type="binding site" evidence="1">
    <location>
        <position position="386"/>
    </location>
    <ligand>
        <name>phosphoenolpyruvate</name>
        <dbReference type="ChEBI" id="CHEBI:58702"/>
    </ligand>
</feature>
<evidence type="ECO:0000255" key="1">
    <source>
        <dbReference type="HAMAP-Rule" id="MF_00210"/>
    </source>
</evidence>
<reference key="1">
    <citation type="journal article" date="2006" name="J. Bacteriol.">
        <title>The genome sequence of Methanosphaera stadtmanae reveals why this human intestinal archaeon is restricted to methanol and H2 for methane formation and ATP synthesis.</title>
        <authorList>
            <person name="Fricke W.F."/>
            <person name="Seedorf H."/>
            <person name="Henne A."/>
            <person name="Kruer M."/>
            <person name="Liesegang H."/>
            <person name="Hedderich R."/>
            <person name="Gottschalk G."/>
            <person name="Thauer R.K."/>
        </authorList>
    </citation>
    <scope>NUCLEOTIDE SEQUENCE [LARGE SCALE GENOMIC DNA]</scope>
    <source>
        <strain>ATCC 43021 / DSM 3091 / JCM 11832 / MCB-3</strain>
    </source>
</reference>
<keyword id="KW-0028">Amino-acid biosynthesis</keyword>
<keyword id="KW-0057">Aromatic amino acid biosynthesis</keyword>
<keyword id="KW-0963">Cytoplasm</keyword>
<keyword id="KW-1185">Reference proteome</keyword>
<keyword id="KW-0808">Transferase</keyword>
<comment type="function">
    <text evidence="1">Catalyzes the transfer of the enolpyruvyl moiety of phosphoenolpyruvate (PEP) to the 5-hydroxyl of shikimate-3-phosphate (S3P) to produce enolpyruvyl shikimate-3-phosphate and inorganic phosphate.</text>
</comment>
<comment type="catalytic activity">
    <reaction evidence="1">
        <text>3-phosphoshikimate + phosphoenolpyruvate = 5-O-(1-carboxyvinyl)-3-phosphoshikimate + phosphate</text>
        <dbReference type="Rhea" id="RHEA:21256"/>
        <dbReference type="ChEBI" id="CHEBI:43474"/>
        <dbReference type="ChEBI" id="CHEBI:57701"/>
        <dbReference type="ChEBI" id="CHEBI:58702"/>
        <dbReference type="ChEBI" id="CHEBI:145989"/>
        <dbReference type="EC" id="2.5.1.19"/>
    </reaction>
    <physiologicalReaction direction="left-to-right" evidence="1">
        <dbReference type="Rhea" id="RHEA:21257"/>
    </physiologicalReaction>
</comment>
<comment type="pathway">
    <text evidence="1">Metabolic intermediate biosynthesis; chorismate biosynthesis.</text>
</comment>
<comment type="subunit">
    <text evidence="1">Monomer.</text>
</comment>
<comment type="subcellular location">
    <subcellularLocation>
        <location evidence="1">Cytoplasm</location>
    </subcellularLocation>
</comment>
<comment type="similarity">
    <text evidence="1">Belongs to the EPSP synthase family.</text>
</comment>
<name>AROA_METST</name>
<protein>
    <recommendedName>
        <fullName evidence="1">3-phosphoshikimate 1-carboxyvinyltransferase</fullName>
        <ecNumber evidence="1">2.5.1.19</ecNumber>
    </recommendedName>
    <alternativeName>
        <fullName evidence="1">5-enolpyruvylshikimate-3-phosphate synthase</fullName>
        <shortName evidence="1">EPSP synthase</shortName>
        <shortName evidence="1">EPSPS</shortName>
    </alternativeName>
</protein>